<comment type="function">
    <text evidence="1">Catalyzes the deamination of dCTP to dUTP.</text>
</comment>
<comment type="catalytic activity">
    <reaction evidence="1">
        <text>dCTP + H2O + H(+) = dUTP + NH4(+)</text>
        <dbReference type="Rhea" id="RHEA:22680"/>
        <dbReference type="ChEBI" id="CHEBI:15377"/>
        <dbReference type="ChEBI" id="CHEBI:15378"/>
        <dbReference type="ChEBI" id="CHEBI:28938"/>
        <dbReference type="ChEBI" id="CHEBI:61481"/>
        <dbReference type="ChEBI" id="CHEBI:61555"/>
        <dbReference type="EC" id="3.5.4.13"/>
    </reaction>
</comment>
<comment type="pathway">
    <text evidence="1">Pyrimidine metabolism; dUMP biosynthesis; dUMP from dCTP (dUTP route): step 1/2.</text>
</comment>
<comment type="subunit">
    <text evidence="1">Homotrimer.</text>
</comment>
<comment type="similarity">
    <text evidence="1">Belongs to the dCTP deaminase family.</text>
</comment>
<evidence type="ECO:0000255" key="1">
    <source>
        <dbReference type="HAMAP-Rule" id="MF_00146"/>
    </source>
</evidence>
<name>DCD_XANOM</name>
<feature type="chain" id="PRO_1000009831" description="dCTP deaminase">
    <location>
        <begin position="1"/>
        <end position="189"/>
    </location>
</feature>
<feature type="active site" description="Proton donor/acceptor" evidence="1">
    <location>
        <position position="138"/>
    </location>
</feature>
<feature type="binding site" evidence="1">
    <location>
        <begin position="112"/>
        <end position="117"/>
    </location>
    <ligand>
        <name>dCTP</name>
        <dbReference type="ChEBI" id="CHEBI:61481"/>
    </ligand>
</feature>
<feature type="binding site" evidence="1">
    <location>
        <begin position="136"/>
        <end position="138"/>
    </location>
    <ligand>
        <name>dCTP</name>
        <dbReference type="ChEBI" id="CHEBI:61481"/>
    </ligand>
</feature>
<feature type="binding site" evidence="1">
    <location>
        <position position="157"/>
    </location>
    <ligand>
        <name>dCTP</name>
        <dbReference type="ChEBI" id="CHEBI:61481"/>
    </ligand>
</feature>
<feature type="binding site" evidence="1">
    <location>
        <position position="171"/>
    </location>
    <ligand>
        <name>dCTP</name>
        <dbReference type="ChEBI" id="CHEBI:61481"/>
    </ligand>
</feature>
<feature type="binding site" evidence="1">
    <location>
        <position position="181"/>
    </location>
    <ligand>
        <name>dCTP</name>
        <dbReference type="ChEBI" id="CHEBI:61481"/>
    </ligand>
</feature>
<accession>Q2P0R9</accession>
<keyword id="KW-0378">Hydrolase</keyword>
<keyword id="KW-0546">Nucleotide metabolism</keyword>
<keyword id="KW-0547">Nucleotide-binding</keyword>
<protein>
    <recommendedName>
        <fullName evidence="1">dCTP deaminase</fullName>
        <ecNumber evidence="1">3.5.4.13</ecNumber>
    </recommendedName>
    <alternativeName>
        <fullName evidence="1">Deoxycytidine triphosphate deaminase</fullName>
    </alternativeName>
</protein>
<gene>
    <name evidence="1" type="primary">dcd</name>
    <name type="ordered locus">XOO3103</name>
</gene>
<proteinExistence type="inferred from homology"/>
<reference key="1">
    <citation type="journal article" date="2005" name="Jpn. Agric. Res. Q.">
        <title>Genome sequence of Xanthomonas oryzae pv. oryzae suggests contribution of large numbers of effector genes and insertion sequences to its race diversity.</title>
        <authorList>
            <person name="Ochiai H."/>
            <person name="Inoue Y."/>
            <person name="Takeya M."/>
            <person name="Sasaki A."/>
            <person name="Kaku H."/>
        </authorList>
    </citation>
    <scope>NUCLEOTIDE SEQUENCE [LARGE SCALE GENOMIC DNA]</scope>
    <source>
        <strain>MAFF 311018</strain>
    </source>
</reference>
<dbReference type="EC" id="3.5.4.13" evidence="1"/>
<dbReference type="EMBL" id="AP008229">
    <property type="protein sequence ID" value="BAE69858.1"/>
    <property type="molecule type" value="Genomic_DNA"/>
</dbReference>
<dbReference type="RefSeq" id="WP_011259784.1">
    <property type="nucleotide sequence ID" value="NC_007705.1"/>
</dbReference>
<dbReference type="SMR" id="Q2P0R9"/>
<dbReference type="GeneID" id="77336933"/>
<dbReference type="KEGG" id="xom:XOO3103"/>
<dbReference type="HOGENOM" id="CLU_087476_4_0_6"/>
<dbReference type="UniPathway" id="UPA00610">
    <property type="reaction ID" value="UER00665"/>
</dbReference>
<dbReference type="GO" id="GO:0008829">
    <property type="term" value="F:dCTP deaminase activity"/>
    <property type="evidence" value="ECO:0007669"/>
    <property type="project" value="UniProtKB-UniRule"/>
</dbReference>
<dbReference type="GO" id="GO:0000166">
    <property type="term" value="F:nucleotide binding"/>
    <property type="evidence" value="ECO:0007669"/>
    <property type="project" value="UniProtKB-KW"/>
</dbReference>
<dbReference type="GO" id="GO:0006226">
    <property type="term" value="P:dUMP biosynthetic process"/>
    <property type="evidence" value="ECO:0007669"/>
    <property type="project" value="UniProtKB-UniPathway"/>
</dbReference>
<dbReference type="GO" id="GO:0006229">
    <property type="term" value="P:dUTP biosynthetic process"/>
    <property type="evidence" value="ECO:0007669"/>
    <property type="project" value="UniProtKB-UniRule"/>
</dbReference>
<dbReference type="GO" id="GO:0015949">
    <property type="term" value="P:nucleobase-containing small molecule interconversion"/>
    <property type="evidence" value="ECO:0007669"/>
    <property type="project" value="TreeGrafter"/>
</dbReference>
<dbReference type="CDD" id="cd07557">
    <property type="entry name" value="trimeric_dUTPase"/>
    <property type="match status" value="1"/>
</dbReference>
<dbReference type="FunFam" id="2.70.40.10:FF:000001">
    <property type="entry name" value="dCTP deaminase"/>
    <property type="match status" value="1"/>
</dbReference>
<dbReference type="Gene3D" id="2.70.40.10">
    <property type="match status" value="1"/>
</dbReference>
<dbReference type="HAMAP" id="MF_00146">
    <property type="entry name" value="dCTP_deaminase"/>
    <property type="match status" value="1"/>
</dbReference>
<dbReference type="InterPro" id="IPR011962">
    <property type="entry name" value="dCTP_deaminase"/>
</dbReference>
<dbReference type="InterPro" id="IPR036157">
    <property type="entry name" value="dUTPase-like_sf"/>
</dbReference>
<dbReference type="InterPro" id="IPR033704">
    <property type="entry name" value="dUTPase_trimeric"/>
</dbReference>
<dbReference type="NCBIfam" id="TIGR02274">
    <property type="entry name" value="dCTP_deam"/>
    <property type="match status" value="1"/>
</dbReference>
<dbReference type="PANTHER" id="PTHR42680">
    <property type="entry name" value="DCTP DEAMINASE"/>
    <property type="match status" value="1"/>
</dbReference>
<dbReference type="PANTHER" id="PTHR42680:SF3">
    <property type="entry name" value="DCTP DEAMINASE"/>
    <property type="match status" value="1"/>
</dbReference>
<dbReference type="Pfam" id="PF22769">
    <property type="entry name" value="DCD"/>
    <property type="match status" value="1"/>
</dbReference>
<dbReference type="SUPFAM" id="SSF51283">
    <property type="entry name" value="dUTPase-like"/>
    <property type="match status" value="1"/>
</dbReference>
<sequence>MSIKSDRWIKRMAEQHAMIAPFEPGQIKHDAAGQRIVSFGTSSYGYDVRCSREFKIFTNINSTIVDPKRFDPGSFVDVESDVCIIPPNSFALARTVEYFRIPRDTLVVCLGKSTYARCGIIVNVTPLEPEWEGHVTLEFSNTTPLPARIYANEGVAQMLFFQSDEVCETSYKDRGGKYQGQTGVTLPRT</sequence>
<organism>
    <name type="scientific">Xanthomonas oryzae pv. oryzae (strain MAFF 311018)</name>
    <dbReference type="NCBI Taxonomy" id="342109"/>
    <lineage>
        <taxon>Bacteria</taxon>
        <taxon>Pseudomonadati</taxon>
        <taxon>Pseudomonadota</taxon>
        <taxon>Gammaproteobacteria</taxon>
        <taxon>Lysobacterales</taxon>
        <taxon>Lysobacteraceae</taxon>
        <taxon>Xanthomonas</taxon>
    </lineage>
</organism>